<accession>Q6B0W0</accession>
<evidence type="ECO:0000255" key="1"/>
<evidence type="ECO:0000305" key="2"/>
<evidence type="ECO:0000305" key="3">
    <source>
    </source>
</evidence>
<sequence length="111" mass="12948">MASFDYLFHPFVPCTICPDFPLYKSPAFPSSCLHHPRLLFNDKAFCPLFLVPFPASFTRWLTFLFHLVIYNNKMHHHTYAPHIHDLRAALDTTAPQKKCPKETLHRSDHQG</sequence>
<comment type="subcellular location">
    <subcellularLocation>
        <location evidence="2">Membrane</location>
        <topology evidence="2">Single-pass membrane protein</topology>
    </subcellularLocation>
</comment>
<comment type="miscellaneous">
    <text evidence="2">Partially overlaps ERV2, YPR038W and TIP41.</text>
</comment>
<comment type="caution">
    <text evidence="3">Product of a dubious gene prediction unlikely to encode a functional protein. Because of that it is not part of the S.cerevisiae S288c complete/reference proteome set.</text>
</comment>
<proteinExistence type="uncertain"/>
<feature type="chain" id="PRO_0000299817" description="Putative uncharacterized protein YPR039W">
    <location>
        <begin position="1"/>
        <end position="111"/>
    </location>
</feature>
<feature type="transmembrane region" description="Helical" evidence="1">
    <location>
        <begin position="48"/>
        <end position="70"/>
    </location>
</feature>
<reference key="1">
    <citation type="journal article" date="1997" name="Nature">
        <title>The nucleotide sequence of Saccharomyces cerevisiae chromosome XVI.</title>
        <authorList>
            <person name="Bussey H."/>
            <person name="Storms R.K."/>
            <person name="Ahmed A."/>
            <person name="Albermann K."/>
            <person name="Allen E."/>
            <person name="Ansorge W."/>
            <person name="Araujo R."/>
            <person name="Aparicio A."/>
            <person name="Barrell B.G."/>
            <person name="Badcock K."/>
            <person name="Benes V."/>
            <person name="Botstein D."/>
            <person name="Bowman S."/>
            <person name="Brueckner M."/>
            <person name="Carpenter J."/>
            <person name="Cherry J.M."/>
            <person name="Chung E."/>
            <person name="Churcher C.M."/>
            <person name="Coster F."/>
            <person name="Davis K."/>
            <person name="Davis R.W."/>
            <person name="Dietrich F.S."/>
            <person name="Delius H."/>
            <person name="DiPaolo T."/>
            <person name="Dubois E."/>
            <person name="Duesterhoeft A."/>
            <person name="Duncan M."/>
            <person name="Floeth M."/>
            <person name="Fortin N."/>
            <person name="Friesen J.D."/>
            <person name="Fritz C."/>
            <person name="Goffeau A."/>
            <person name="Hall J."/>
            <person name="Hebling U."/>
            <person name="Heumann K."/>
            <person name="Hilbert H."/>
            <person name="Hillier L.W."/>
            <person name="Hunicke-Smith S."/>
            <person name="Hyman R.W."/>
            <person name="Johnston M."/>
            <person name="Kalman S."/>
            <person name="Kleine K."/>
            <person name="Komp C."/>
            <person name="Kurdi O."/>
            <person name="Lashkari D."/>
            <person name="Lew H."/>
            <person name="Lin A."/>
            <person name="Lin D."/>
            <person name="Louis E.J."/>
            <person name="Marathe R."/>
            <person name="Messenguy F."/>
            <person name="Mewes H.-W."/>
            <person name="Mirtipati S."/>
            <person name="Moestl D."/>
            <person name="Mueller-Auer S."/>
            <person name="Namath A."/>
            <person name="Nentwich U."/>
            <person name="Oefner P."/>
            <person name="Pearson D."/>
            <person name="Petel F.X."/>
            <person name="Pohl T.M."/>
            <person name="Purnelle B."/>
            <person name="Rajandream M.A."/>
            <person name="Rechmann S."/>
            <person name="Rieger M."/>
            <person name="Riles L."/>
            <person name="Roberts D."/>
            <person name="Schaefer M."/>
            <person name="Scharfe M."/>
            <person name="Scherens B."/>
            <person name="Schramm S."/>
            <person name="Schroeder M."/>
            <person name="Sdicu A.-M."/>
            <person name="Tettelin H."/>
            <person name="Urrestarazu L.A."/>
            <person name="Ushinsky S."/>
            <person name="Vierendeels F."/>
            <person name="Vissers S."/>
            <person name="Voss H."/>
            <person name="Walsh S.V."/>
            <person name="Wambutt R."/>
            <person name="Wang Y."/>
            <person name="Wedler E."/>
            <person name="Wedler H."/>
            <person name="Winnett E."/>
            <person name="Zhong W.-W."/>
            <person name="Zollner A."/>
            <person name="Vo D.H."/>
            <person name="Hani J."/>
        </authorList>
    </citation>
    <scope>NUCLEOTIDE SEQUENCE [LARGE SCALE GENOMIC DNA]</scope>
    <source>
        <strain>ATCC 204508 / S288c</strain>
    </source>
</reference>
<reference key="2">
    <citation type="journal article" date="2014" name="G3 (Bethesda)">
        <title>The reference genome sequence of Saccharomyces cerevisiae: Then and now.</title>
        <authorList>
            <person name="Engel S.R."/>
            <person name="Dietrich F.S."/>
            <person name="Fisk D.G."/>
            <person name="Binkley G."/>
            <person name="Balakrishnan R."/>
            <person name="Costanzo M.C."/>
            <person name="Dwight S.S."/>
            <person name="Hitz B.C."/>
            <person name="Karra K."/>
            <person name="Nash R.S."/>
            <person name="Weng S."/>
            <person name="Wong E.D."/>
            <person name="Lloyd P."/>
            <person name="Skrzypek M.S."/>
            <person name="Miyasato S.R."/>
            <person name="Simison M."/>
            <person name="Cherry J.M."/>
        </authorList>
    </citation>
    <scope>GENOME REANNOTATION</scope>
    <source>
        <strain>ATCC 204508 / S288c</strain>
    </source>
</reference>
<reference key="3">
    <citation type="journal article" date="2007" name="Genome Res.">
        <title>Approaching a complete repository of sequence-verified protein-encoding clones for Saccharomyces cerevisiae.</title>
        <authorList>
            <person name="Hu Y."/>
            <person name="Rolfs A."/>
            <person name="Bhullar B."/>
            <person name="Murthy T.V.S."/>
            <person name="Zhu C."/>
            <person name="Berger M.F."/>
            <person name="Camargo A.A."/>
            <person name="Kelley F."/>
            <person name="McCarron S."/>
            <person name="Jepson D."/>
            <person name="Richardson A."/>
            <person name="Raphael J."/>
            <person name="Moreira D."/>
            <person name="Taycher E."/>
            <person name="Zuo D."/>
            <person name="Mohr S."/>
            <person name="Kane M.F."/>
            <person name="Williamson J."/>
            <person name="Simpson A.J.G."/>
            <person name="Bulyk M.L."/>
            <person name="Harlow E."/>
            <person name="Marsischky G."/>
            <person name="Kolodner R.D."/>
            <person name="LaBaer J."/>
        </authorList>
    </citation>
    <scope>NUCLEOTIDE SEQUENCE [GENOMIC DNA]</scope>
    <source>
        <strain>ATCC 204508 / S288c</strain>
    </source>
</reference>
<keyword id="KW-0472">Membrane</keyword>
<keyword id="KW-0812">Transmembrane</keyword>
<keyword id="KW-1133">Transmembrane helix</keyword>
<protein>
    <recommendedName>
        <fullName>Putative uncharacterized protein YPR039W</fullName>
    </recommendedName>
</protein>
<name>YPR39_YEAST</name>
<organism>
    <name type="scientific">Saccharomyces cerevisiae (strain ATCC 204508 / S288c)</name>
    <name type="common">Baker's yeast</name>
    <dbReference type="NCBI Taxonomy" id="559292"/>
    <lineage>
        <taxon>Eukaryota</taxon>
        <taxon>Fungi</taxon>
        <taxon>Dikarya</taxon>
        <taxon>Ascomycota</taxon>
        <taxon>Saccharomycotina</taxon>
        <taxon>Saccharomycetes</taxon>
        <taxon>Saccharomycetales</taxon>
        <taxon>Saccharomycetaceae</taxon>
        <taxon>Saccharomyces</taxon>
    </lineage>
</organism>
<dbReference type="EMBL" id="Z68111">
    <property type="status" value="NOT_ANNOTATED_CDS"/>
    <property type="molecule type" value="Genomic_DNA"/>
</dbReference>
<dbReference type="EMBL" id="Z71255">
    <property type="status" value="NOT_ANNOTATED_CDS"/>
    <property type="molecule type" value="Genomic_DNA"/>
</dbReference>
<dbReference type="EMBL" id="AY693320">
    <property type="protein sequence ID" value="AAT93339.1"/>
    <property type="molecule type" value="Genomic_DNA"/>
</dbReference>
<dbReference type="PaxDb" id="4932-YPR039W"/>
<dbReference type="EnsemblFungi" id="YPR039W_mRNA">
    <property type="protein sequence ID" value="YPR039W"/>
    <property type="gene ID" value="YPR039W"/>
</dbReference>
<dbReference type="AGR" id="SGD:S000006243"/>
<dbReference type="SGD" id="S000006243">
    <property type="gene designation" value="YPR039W"/>
</dbReference>
<dbReference type="HOGENOM" id="CLU_2160377_0_0_1"/>
<dbReference type="GO" id="GO:0016020">
    <property type="term" value="C:membrane"/>
    <property type="evidence" value="ECO:0007669"/>
    <property type="project" value="UniProtKB-SubCell"/>
</dbReference>
<gene>
    <name type="ordered locus">YPR039W</name>
</gene>